<dbReference type="EMBL" id="AJ719413">
    <property type="protein sequence ID" value="CAG31072.1"/>
    <property type="molecule type" value="mRNA"/>
</dbReference>
<dbReference type="RefSeq" id="NP_001006182.1">
    <property type="nucleotide sequence ID" value="NM_001006182.1"/>
</dbReference>
<dbReference type="RefSeq" id="XP_015130724.1">
    <property type="nucleotide sequence ID" value="XM_015275238.1"/>
</dbReference>
<dbReference type="RefSeq" id="XP_015130725.1">
    <property type="nucleotide sequence ID" value="XM_015275239.1"/>
</dbReference>
<dbReference type="SMR" id="Q5ZMH1"/>
<dbReference type="FunCoup" id="Q5ZMH1">
    <property type="interactions" value="805"/>
</dbReference>
<dbReference type="STRING" id="9031.ENSGALP00000060286"/>
<dbReference type="PaxDb" id="9031-ENSGALP00000002520"/>
<dbReference type="Ensembl" id="ENSGALT00010065446.1">
    <property type="protein sequence ID" value="ENSGALP00010039820.1"/>
    <property type="gene ID" value="ENSGALG00010027003.1"/>
</dbReference>
<dbReference type="GeneID" id="416777"/>
<dbReference type="KEGG" id="gga:416777"/>
<dbReference type="CTD" id="416777"/>
<dbReference type="VEuPathDB" id="HostDB:geneid_416777"/>
<dbReference type="eggNOG" id="KOG2655">
    <property type="taxonomic scope" value="Eukaryota"/>
</dbReference>
<dbReference type="GeneTree" id="ENSGT00940000164668"/>
<dbReference type="HOGENOM" id="CLU_017718_0_0_1"/>
<dbReference type="InParanoid" id="Q5ZMH1"/>
<dbReference type="OMA" id="AKFKRNI"/>
<dbReference type="OrthoDB" id="416553at2759"/>
<dbReference type="PhylomeDB" id="Q5ZMH1"/>
<dbReference type="PRO" id="PR:Q5ZMH1"/>
<dbReference type="Proteomes" id="UP000000539">
    <property type="component" value="Chromosome 15"/>
</dbReference>
<dbReference type="Bgee" id="ENSGALG00000001652">
    <property type="expression patterns" value="Expressed in ovary and 14 other cell types or tissues"/>
</dbReference>
<dbReference type="GO" id="GO:0032153">
    <property type="term" value="C:cell division site"/>
    <property type="evidence" value="ECO:0000318"/>
    <property type="project" value="GO_Central"/>
</dbReference>
<dbReference type="GO" id="GO:0060170">
    <property type="term" value="C:ciliary membrane"/>
    <property type="evidence" value="ECO:0000250"/>
    <property type="project" value="UniProtKB"/>
</dbReference>
<dbReference type="GO" id="GO:0032154">
    <property type="term" value="C:cleavage furrow"/>
    <property type="evidence" value="ECO:0007669"/>
    <property type="project" value="UniProtKB-SubCell"/>
</dbReference>
<dbReference type="GO" id="GO:0005737">
    <property type="term" value="C:cytoplasm"/>
    <property type="evidence" value="ECO:0000250"/>
    <property type="project" value="UniProtKB"/>
</dbReference>
<dbReference type="GO" id="GO:0015630">
    <property type="term" value="C:microtubule cytoskeleton"/>
    <property type="evidence" value="ECO:0000318"/>
    <property type="project" value="GO_Central"/>
</dbReference>
<dbReference type="GO" id="GO:0030496">
    <property type="term" value="C:midbody"/>
    <property type="evidence" value="ECO:0007669"/>
    <property type="project" value="UniProtKB-SubCell"/>
</dbReference>
<dbReference type="GO" id="GO:0031105">
    <property type="term" value="C:septin complex"/>
    <property type="evidence" value="ECO:0000318"/>
    <property type="project" value="GO_Central"/>
</dbReference>
<dbReference type="GO" id="GO:0005940">
    <property type="term" value="C:septin ring"/>
    <property type="evidence" value="ECO:0000318"/>
    <property type="project" value="GO_Central"/>
</dbReference>
<dbReference type="GO" id="GO:0005819">
    <property type="term" value="C:spindle"/>
    <property type="evidence" value="ECO:0007669"/>
    <property type="project" value="UniProtKB-SubCell"/>
</dbReference>
<dbReference type="GO" id="GO:0008021">
    <property type="term" value="C:synaptic vesicle"/>
    <property type="evidence" value="ECO:0000318"/>
    <property type="project" value="GO_Central"/>
</dbReference>
<dbReference type="GO" id="GO:0005525">
    <property type="term" value="F:GTP binding"/>
    <property type="evidence" value="ECO:0007669"/>
    <property type="project" value="UniProtKB-KW"/>
</dbReference>
<dbReference type="GO" id="GO:0003924">
    <property type="term" value="F:GTPase activity"/>
    <property type="evidence" value="ECO:0000318"/>
    <property type="project" value="GO_Central"/>
</dbReference>
<dbReference type="GO" id="GO:0060090">
    <property type="term" value="F:molecular adaptor activity"/>
    <property type="evidence" value="ECO:0000318"/>
    <property type="project" value="GO_Central"/>
</dbReference>
<dbReference type="GO" id="GO:0060271">
    <property type="term" value="P:cilium assembly"/>
    <property type="evidence" value="ECO:0000250"/>
    <property type="project" value="UniProtKB"/>
</dbReference>
<dbReference type="GO" id="GO:0061640">
    <property type="term" value="P:cytoskeleton-dependent cytokinesis"/>
    <property type="evidence" value="ECO:0000318"/>
    <property type="project" value="GO_Central"/>
</dbReference>
<dbReference type="GO" id="GO:0008104">
    <property type="term" value="P:protein localization"/>
    <property type="evidence" value="ECO:0000318"/>
    <property type="project" value="GO_Central"/>
</dbReference>
<dbReference type="GO" id="GO:0017157">
    <property type="term" value="P:regulation of exocytosis"/>
    <property type="evidence" value="ECO:0000318"/>
    <property type="project" value="GO_Central"/>
</dbReference>
<dbReference type="GO" id="GO:0007224">
    <property type="term" value="P:smoothened signaling pathway"/>
    <property type="evidence" value="ECO:0000250"/>
    <property type="project" value="UniProtKB"/>
</dbReference>
<dbReference type="CDD" id="cd01850">
    <property type="entry name" value="CDC_Septin"/>
    <property type="match status" value="1"/>
</dbReference>
<dbReference type="FunFam" id="3.40.50.300:FF:000064">
    <property type="entry name" value="Septin 4"/>
    <property type="match status" value="1"/>
</dbReference>
<dbReference type="Gene3D" id="3.40.50.300">
    <property type="entry name" value="P-loop containing nucleotide triphosphate hydrolases"/>
    <property type="match status" value="1"/>
</dbReference>
<dbReference type="InterPro" id="IPR030379">
    <property type="entry name" value="G_SEPTIN_dom"/>
</dbReference>
<dbReference type="InterPro" id="IPR027417">
    <property type="entry name" value="P-loop_NTPase"/>
</dbReference>
<dbReference type="InterPro" id="IPR016491">
    <property type="entry name" value="Septin"/>
</dbReference>
<dbReference type="InterPro" id="IPR008113">
    <property type="entry name" value="Septin2"/>
</dbReference>
<dbReference type="PANTHER" id="PTHR18884">
    <property type="entry name" value="SEPTIN"/>
    <property type="match status" value="1"/>
</dbReference>
<dbReference type="Pfam" id="PF00735">
    <property type="entry name" value="Septin"/>
    <property type="match status" value="1"/>
</dbReference>
<dbReference type="PIRSF" id="PIRSF006698">
    <property type="entry name" value="Septin"/>
    <property type="match status" value="1"/>
</dbReference>
<dbReference type="PRINTS" id="PR01740">
    <property type="entry name" value="SEPTIN2"/>
</dbReference>
<dbReference type="SUPFAM" id="SSF52540">
    <property type="entry name" value="P-loop containing nucleoside triphosphate hydrolases"/>
    <property type="match status" value="1"/>
</dbReference>
<dbReference type="PROSITE" id="PS51719">
    <property type="entry name" value="G_SEPTIN"/>
    <property type="match status" value="1"/>
</dbReference>
<proteinExistence type="evidence at transcript level"/>
<organism>
    <name type="scientific">Gallus gallus</name>
    <name type="common">Chicken</name>
    <dbReference type="NCBI Taxonomy" id="9031"/>
    <lineage>
        <taxon>Eukaryota</taxon>
        <taxon>Metazoa</taxon>
        <taxon>Chordata</taxon>
        <taxon>Craniata</taxon>
        <taxon>Vertebrata</taxon>
        <taxon>Euteleostomi</taxon>
        <taxon>Archelosauria</taxon>
        <taxon>Archosauria</taxon>
        <taxon>Dinosauria</taxon>
        <taxon>Saurischia</taxon>
        <taxon>Theropoda</taxon>
        <taxon>Coelurosauria</taxon>
        <taxon>Aves</taxon>
        <taxon>Neognathae</taxon>
        <taxon>Galloanserae</taxon>
        <taxon>Galliformes</taxon>
        <taxon>Phasianidae</taxon>
        <taxon>Phasianinae</taxon>
        <taxon>Gallus</taxon>
    </lineage>
</organism>
<protein>
    <recommendedName>
        <fullName>Septin-2</fullName>
    </recommendedName>
</protein>
<keyword id="KW-0131">Cell cycle</keyword>
<keyword id="KW-0132">Cell division</keyword>
<keyword id="KW-1003">Cell membrane</keyword>
<keyword id="KW-0966">Cell projection</keyword>
<keyword id="KW-0963">Cytoplasm</keyword>
<keyword id="KW-0206">Cytoskeleton</keyword>
<keyword id="KW-0342">GTP-binding</keyword>
<keyword id="KW-0472">Membrane</keyword>
<keyword id="KW-0498">Mitosis</keyword>
<keyword id="KW-0547">Nucleotide-binding</keyword>
<keyword id="KW-1185">Reference proteome</keyword>
<accession>Q5ZMH1</accession>
<comment type="function">
    <text evidence="1">Filament-forming cytoskeletal GTPase. Required for normal organization of the actin cytoskeleton. Plays a role in the biogenesis of polarized columnar-shaped epithelium by maintaining polyglutamylated microtubules, thus facilitating efficient vesicle transport, and by impeding MAP4 binding to tubulin. Required for the progression through mitosis. Forms a scaffold at the midplane of the mitotic splindle required to maintain CENPE localization at kinetochores and consequently chromosome congression. During anaphase, may be required for chromosome segregation and spindle elongation. Plays a role in ciliogenesis and collective cell movements. In cilia, required for the integrity of the diffusion barrier at the base of the primary cilium that prevents diffusion of transmembrane proteins between the cilia and plasma membranes (By similarity).</text>
</comment>
<comment type="subunit">
    <text evidence="1">Septins polymerize into heterooligomeric protein complexes that form filaments, and associate with cellular membranes, actin filaments and microtubules. GTPase activity is required for filament formation. Can form heterooligomers with other family members and form filaments (By similarity).</text>
</comment>
<comment type="subcellular location">
    <subcellularLocation>
        <location evidence="1">Cytoplasm</location>
    </subcellularLocation>
    <subcellularLocation>
        <location evidence="1">Cytoplasm</location>
        <location evidence="1">Cytoskeleton</location>
    </subcellularLocation>
    <subcellularLocation>
        <location evidence="1">Cytoplasm</location>
        <location evidence="1">Cytoskeleton</location>
        <location evidence="1">Spindle</location>
    </subcellularLocation>
    <subcellularLocation>
        <location evidence="1">Cleavage furrow</location>
    </subcellularLocation>
    <subcellularLocation>
        <location evidence="1">Midbody</location>
    </subcellularLocation>
    <subcellularLocation>
        <location evidence="1">Cytoplasm</location>
        <location evidence="1">Cell cortex</location>
    </subcellularLocation>
    <subcellularLocation>
        <location evidence="1">Cell projection</location>
        <location evidence="1">Cilium membrane</location>
    </subcellularLocation>
    <text evidence="1">Localizes at the base of the cilia near the morphological distinction between the cilia and plasma membranes.</text>
</comment>
<comment type="similarity">
    <text evidence="3">Belongs to the TRAFAC class TrmE-Era-EngA-EngB-Septin-like GTPase superfamily. Septin GTPase family.</text>
</comment>
<name>SEPT2_CHICK</name>
<gene>
    <name evidence="2" type="primary">SEPTIN2</name>
    <name type="synonym">SEPT2</name>
    <name type="ORF">RCJMB04_2a21</name>
</gene>
<evidence type="ECO:0000250" key="1"/>
<evidence type="ECO:0000250" key="2">
    <source>
        <dbReference type="UniProtKB" id="Q15019"/>
    </source>
</evidence>
<evidence type="ECO:0000255" key="3">
    <source>
        <dbReference type="PROSITE-ProRule" id="PRU01056"/>
    </source>
</evidence>
<reference key="1">
    <citation type="journal article" date="2005" name="Genome Biol.">
        <title>Full-length cDNAs from chicken bursal lymphocytes to facilitate gene function analysis.</title>
        <authorList>
            <person name="Caldwell R.B."/>
            <person name="Kierzek A.M."/>
            <person name="Arakawa H."/>
            <person name="Bezzubov Y."/>
            <person name="Zaim J."/>
            <person name="Fiedler P."/>
            <person name="Kutter S."/>
            <person name="Blagodatski A."/>
            <person name="Kostovska D."/>
            <person name="Koter M."/>
            <person name="Plachy J."/>
            <person name="Carninci P."/>
            <person name="Hayashizaki Y."/>
            <person name="Buerstedde J.-M."/>
        </authorList>
    </citation>
    <scope>NUCLEOTIDE SEQUENCE [LARGE SCALE MRNA]</scope>
    <source>
        <strain>CB</strain>
        <tissue>Bursa of Fabricius</tissue>
    </source>
</reference>
<sequence length="349" mass="40225">MSQSGEKVKFSDSAGYVGFANLPNQVHRKSVKKGFEFTLMVVGESGLGKSTLINSLFLTDLYPERYIPGAAEKIERTVQIEASTVEIEERGVKLRLTVVDTPGYGDAINSQDCFKTIIQYIDNQFERYLHDESGLNRRHIIDNRVHCCFYFISPFGHGLKPLDVEFMKALHGKVNIVPVIAKADTLTLKERERLKRRVLDEISEHGIRIYQLPDADSDEDEEFKEQTRVLKASIPFAVIGSNQLIEVKGKKIRGRLYPWGVVEVENPEHNDFLKLRTMLVTHMQDLQEVTQDLHYENFRSERLKRTGKPVEEEVVDKDRILQQKEAELRRMQEMIAQMQAQMRMKPGDD</sequence>
<feature type="chain" id="PRO_0000363220" description="Septin-2">
    <location>
        <begin position="1"/>
        <end position="349"/>
    </location>
</feature>
<feature type="domain" description="Septin-type G" evidence="3">
    <location>
        <begin position="33"/>
        <end position="305"/>
    </location>
</feature>
<feature type="region of interest" description="G1 motif" evidence="3">
    <location>
        <begin position="43"/>
        <end position="50"/>
    </location>
</feature>
<feature type="region of interest" description="G3 motif" evidence="3">
    <location>
        <begin position="100"/>
        <end position="103"/>
    </location>
</feature>
<feature type="region of interest" description="G4 motif" evidence="3">
    <location>
        <begin position="181"/>
        <end position="184"/>
    </location>
</feature>
<feature type="region of interest" description="Important for dimerization" evidence="1">
    <location>
        <begin position="259"/>
        <end position="269"/>
    </location>
</feature>
<feature type="binding site" evidence="1">
    <location>
        <begin position="43"/>
        <end position="50"/>
    </location>
    <ligand>
        <name>GTP</name>
        <dbReference type="ChEBI" id="CHEBI:37565"/>
    </ligand>
</feature>
<feature type="binding site" evidence="1">
    <location>
        <position position="77"/>
    </location>
    <ligand>
        <name>GTP</name>
        <dbReference type="ChEBI" id="CHEBI:37565"/>
    </ligand>
</feature>
<feature type="binding site" evidence="1">
    <location>
        <position position="103"/>
    </location>
    <ligand>
        <name>GTP</name>
        <dbReference type="ChEBI" id="CHEBI:37565"/>
    </ligand>
</feature>
<feature type="binding site" evidence="1">
    <location>
        <begin position="182"/>
        <end position="190"/>
    </location>
    <ligand>
        <name>GTP</name>
        <dbReference type="ChEBI" id="CHEBI:37565"/>
    </ligand>
</feature>
<feature type="binding site" evidence="1">
    <location>
        <position position="240"/>
    </location>
    <ligand>
        <name>GTP</name>
        <dbReference type="ChEBI" id="CHEBI:37565"/>
    </ligand>
</feature>
<feature type="binding site" evidence="1">
    <location>
        <position position="255"/>
    </location>
    <ligand>
        <name>GTP</name>
        <dbReference type="ChEBI" id="CHEBI:37565"/>
    </ligand>
</feature>
<feature type="site" description="Important for dimerization" evidence="1">
    <location>
        <position position="155"/>
    </location>
</feature>